<organism>
    <name type="scientific">Haloferax volcanii (strain ATCC 29605 / DSM 3757 / JCM 8879 / NBRC 14742 / NCIMB 2012 / VKM B-1768 / DS2)</name>
    <name type="common">Halobacterium volcanii</name>
    <dbReference type="NCBI Taxonomy" id="309800"/>
    <lineage>
        <taxon>Archaea</taxon>
        <taxon>Methanobacteriati</taxon>
        <taxon>Methanobacteriota</taxon>
        <taxon>Stenosarchaea group</taxon>
        <taxon>Halobacteria</taxon>
        <taxon>Halobacteriales</taxon>
        <taxon>Haloferacaceae</taxon>
        <taxon>Haloferax</taxon>
    </lineage>
</organism>
<gene>
    <name type="primary">agl8</name>
    <name type="ordered locus">HVO_2060</name>
    <name type="ORF">C498_05588</name>
</gene>
<protein>
    <recommendedName>
        <fullName>Low-salt glycan biosynthesis protein Agl8</fullName>
        <ecNumber>3.6.1.-</ecNumber>
    </recommendedName>
</protein>
<name>AGL8_HALVD</name>
<reference key="1">
    <citation type="journal article" date="2010" name="PLoS ONE">
        <title>The complete genome sequence of Haloferax volcanii DS2, a model archaeon.</title>
        <authorList>
            <person name="Hartman A.L."/>
            <person name="Norais C."/>
            <person name="Badger J.H."/>
            <person name="Delmas S."/>
            <person name="Haldenby S."/>
            <person name="Madupu R."/>
            <person name="Robinson J."/>
            <person name="Khouri H."/>
            <person name="Ren Q."/>
            <person name="Lowe T.M."/>
            <person name="Maupin-Furlow J."/>
            <person name="Pohlschroder M."/>
            <person name="Daniels C."/>
            <person name="Pfeiffer F."/>
            <person name="Allers T."/>
            <person name="Eisen J.A."/>
        </authorList>
    </citation>
    <scope>NUCLEOTIDE SEQUENCE [LARGE SCALE GENOMIC DNA]</scope>
    <source>
        <strain>ATCC 29605 / DSM 3757 / JCM 8879 / NBRC 14742 / NCIMB 2012 / VKM B-1768 / DS2</strain>
    </source>
</reference>
<reference key="2">
    <citation type="journal article" date="2014" name="PLoS Genet.">
        <title>Phylogenetically driven sequencing of extremely halophilic archaea reveals strategies for static and dynamic osmo-response.</title>
        <authorList>
            <person name="Becker E.A."/>
            <person name="Seitzer P.M."/>
            <person name="Tritt A."/>
            <person name="Larsen D."/>
            <person name="Krusor M."/>
            <person name="Yao A.I."/>
            <person name="Wu D."/>
            <person name="Madern D."/>
            <person name="Eisen J.A."/>
            <person name="Darling A.E."/>
            <person name="Facciotti M.T."/>
        </authorList>
    </citation>
    <scope>NUCLEOTIDE SEQUENCE [LARGE SCALE GENOMIC DNA]</scope>
    <source>
        <strain>ATCC 29605 / DSM 3757 / JCM 8879 / NBRC 14742 / NCIMB 2012 / VKM B-1768 / DS2</strain>
    </source>
</reference>
<reference key="3">
    <citation type="journal article" date="2013" name="MBio">
        <title>Two distinct N-glycosylation pathways process the Haloferax volcanii S-layer glycoprotein upon changes in environmental salinity.</title>
        <authorList>
            <person name="Kaminski L."/>
            <person name="Guan Z."/>
            <person name="Yurist-Doutsch S."/>
            <person name="Eichler J."/>
        </authorList>
    </citation>
    <scope>FUNCTION</scope>
    <scope>PATHWAY</scope>
    <scope>DISRUPTION PHENOTYPE</scope>
    <source>
        <strain>ATCC 29605 / DSM 3757 / JCM 8879 / NBRC 14742 / NCIMB 2012 / VKM B-1768 / DS2</strain>
    </source>
</reference>
<sequence length="156" mass="17700">MADQRNQADKPTTRIPDDEWEAIVANVPLVSVDLVIRHEGGVLLGFRENEPARGEWFVPGGTVFKNETLTDALYRVADEELGVDVTIESRLGTFEHFYDTSDVEGIDSKHYLATAFEVTLDDDNLEMDTQHSQLKVFEPPYEGLHPYVERYLDALD</sequence>
<proteinExistence type="inferred from homology"/>
<dbReference type="EC" id="3.6.1.-"/>
<dbReference type="EMBL" id="CP001956">
    <property type="protein sequence ID" value="ADE04487.1"/>
    <property type="molecule type" value="Genomic_DNA"/>
</dbReference>
<dbReference type="EMBL" id="AOHU01000040">
    <property type="protein sequence ID" value="ELY33654.1"/>
    <property type="molecule type" value="Genomic_DNA"/>
</dbReference>
<dbReference type="RefSeq" id="WP_004041945.1">
    <property type="nucleotide sequence ID" value="NC_013967.1"/>
</dbReference>
<dbReference type="SMR" id="D4GU73"/>
<dbReference type="STRING" id="309800.HVO_2060"/>
<dbReference type="PaxDb" id="309800-C498_05588"/>
<dbReference type="EnsemblBacteria" id="ADE04487">
    <property type="protein sequence ID" value="ADE04487"/>
    <property type="gene ID" value="HVO_2060"/>
</dbReference>
<dbReference type="GeneID" id="8925149"/>
<dbReference type="KEGG" id="hvo:HVO_2060"/>
<dbReference type="PATRIC" id="fig|309800.29.peg.1084"/>
<dbReference type="eggNOG" id="arCOG01075">
    <property type="taxonomic scope" value="Archaea"/>
</dbReference>
<dbReference type="HOGENOM" id="CLU_037162_12_0_2"/>
<dbReference type="OrthoDB" id="40462at2157"/>
<dbReference type="UniPathway" id="UPA00378"/>
<dbReference type="UniPathway" id="UPA00977"/>
<dbReference type="Proteomes" id="UP000008243">
    <property type="component" value="Chromosome"/>
</dbReference>
<dbReference type="Proteomes" id="UP000011532">
    <property type="component" value="Unassembled WGS sequence"/>
</dbReference>
<dbReference type="GO" id="GO:0016787">
    <property type="term" value="F:hydrolase activity"/>
    <property type="evidence" value="ECO:0007669"/>
    <property type="project" value="UniProtKB-KW"/>
</dbReference>
<dbReference type="GO" id="GO:0046872">
    <property type="term" value="F:metal ion binding"/>
    <property type="evidence" value="ECO:0007669"/>
    <property type="project" value="UniProtKB-KW"/>
</dbReference>
<dbReference type="GO" id="GO:0006486">
    <property type="term" value="P:protein glycosylation"/>
    <property type="evidence" value="ECO:0007669"/>
    <property type="project" value="UniProtKB-UniPathway"/>
</dbReference>
<dbReference type="GO" id="GO:0045232">
    <property type="term" value="P:S-layer organization"/>
    <property type="evidence" value="ECO:0007669"/>
    <property type="project" value="UniProtKB-UniPathway"/>
</dbReference>
<dbReference type="CDD" id="cd03430">
    <property type="entry name" value="NUDIX_GDPMH_NudD"/>
    <property type="match status" value="1"/>
</dbReference>
<dbReference type="Gene3D" id="3.90.79.10">
    <property type="entry name" value="Nucleoside Triphosphate Pyrophosphohydrolase"/>
    <property type="match status" value="1"/>
</dbReference>
<dbReference type="InterPro" id="IPR015797">
    <property type="entry name" value="NUDIX_hydrolase-like_dom_sf"/>
</dbReference>
<dbReference type="InterPro" id="IPR000086">
    <property type="entry name" value="NUDIX_hydrolase_dom"/>
</dbReference>
<dbReference type="PANTHER" id="PTHR43046">
    <property type="entry name" value="GDP-MANNOSE MANNOSYL HYDROLASE"/>
    <property type="match status" value="1"/>
</dbReference>
<dbReference type="PANTHER" id="PTHR43046:SF12">
    <property type="entry name" value="GDP-MANNOSE MANNOSYL HYDROLASE"/>
    <property type="match status" value="1"/>
</dbReference>
<dbReference type="Pfam" id="PF00293">
    <property type="entry name" value="NUDIX"/>
    <property type="match status" value="1"/>
</dbReference>
<dbReference type="SUPFAM" id="SSF55811">
    <property type="entry name" value="Nudix"/>
    <property type="match status" value="1"/>
</dbReference>
<dbReference type="PROSITE" id="PS51462">
    <property type="entry name" value="NUDIX"/>
    <property type="match status" value="1"/>
</dbReference>
<keyword id="KW-0378">Hydrolase</keyword>
<keyword id="KW-0460">Magnesium</keyword>
<keyword id="KW-0479">Metal-binding</keyword>
<keyword id="KW-1185">Reference proteome</keyword>
<accession>D4GU73</accession>
<evidence type="ECO:0000250" key="1"/>
<evidence type="ECO:0000255" key="2">
    <source>
        <dbReference type="PROSITE-ProRule" id="PRU00794"/>
    </source>
</evidence>
<evidence type="ECO:0000269" key="3">
    <source>
    </source>
</evidence>
<evidence type="ECO:0000305" key="4"/>
<feature type="chain" id="PRO_0000428773" description="Low-salt glycan biosynthesis protein Agl8">
    <location>
        <begin position="1"/>
        <end position="156"/>
    </location>
</feature>
<feature type="domain" description="Nudix hydrolase" evidence="2">
    <location>
        <begin position="25"/>
        <end position="156"/>
    </location>
</feature>
<feature type="short sequence motif" description="Nudix box">
    <location>
        <begin position="61"/>
        <end position="82"/>
    </location>
</feature>
<feature type="binding site" evidence="1">
    <location>
        <begin position="14"/>
        <end position="15"/>
    </location>
    <ligand>
        <name>substrate</name>
    </ligand>
</feature>
<feature type="binding site" evidence="1">
    <location>
        <position position="47"/>
    </location>
    <ligand>
        <name>substrate</name>
    </ligand>
</feature>
<feature type="binding site" evidence="1">
    <location>
        <position position="60"/>
    </location>
    <ligand>
        <name>Mg(2+)</name>
        <dbReference type="ChEBI" id="CHEBI:18420"/>
    </ligand>
</feature>
<feature type="binding site" evidence="1">
    <location>
        <position position="80"/>
    </location>
    <ligand>
        <name>Mg(2+)</name>
        <dbReference type="ChEBI" id="CHEBI:18420"/>
    </ligand>
</feature>
<feature type="binding site" evidence="1">
    <location>
        <position position="130"/>
    </location>
    <ligand>
        <name>Mg(2+)</name>
        <dbReference type="ChEBI" id="CHEBI:18420"/>
    </ligand>
</feature>
<comment type="function">
    <text evidence="3">Nudix hydrolase involved in N-glycan biosynthetic pathway that takes place under low-salt conditions (1.75 M instead of 3.4 M). Participates in the formation of the tetrasaccharide present at 'Asn-532' of S-layer glycoprotein Csg, consisting of a sulfated hexose, 2 hexoses and rhamnose. Mediates attachment of sugar 3 in the tetrasaccharide.</text>
</comment>
<comment type="cofactor">
    <cofactor evidence="1">
        <name>Mg(2+)</name>
        <dbReference type="ChEBI" id="CHEBI:18420"/>
    </cofactor>
    <text evidence="1">Binds 1 Mg(2+) ion per subunit.</text>
</comment>
<comment type="pathway">
    <text evidence="3">Protein modification; protein glycosylation.</text>
</comment>
<comment type="pathway">
    <text evidence="3">Cell surface structure biogenesis; S-layer biogenesis.</text>
</comment>
<comment type="disruption phenotype">
    <text evidence="3">Impaired formation of the tetrasaccharide present at 'Asn-532' of S-layer glycoprotein Csg. No effect on 'Asn-47' and 'Asn-117' glycosylation of S-layer glycoprotein Csg.</text>
</comment>
<comment type="similarity">
    <text evidence="4">Belongs to the Nudix hydrolase family.</text>
</comment>